<name>GCH1_STRP6</name>
<sequence length="194" mass="21871">MKRERLMSINKEKAEAAIYQFLEAIGENPNREGLLDTPKRVAKMYAEMFLGLGKDPKEEFTAVFKEQHEDVVIVKDISFYSICEHHLVPFYGKAHIAYLPSDGRVTGLSKLARAVEVASKRPQLQERLTSQIADALVEALNPKGTLVMVEAEHMCMTMRGIKKPGSKTITTTARGLYKESRAERQEVISLMTKD</sequence>
<protein>
    <recommendedName>
        <fullName evidence="2">GTP cyclohydrolase 1</fullName>
        <ecNumber evidence="2">3.5.4.16</ecNumber>
    </recommendedName>
    <alternativeName>
        <fullName evidence="2">GTP cyclohydrolase I</fullName>
        <shortName evidence="2">GTP-CH-I</shortName>
    </alternativeName>
</protein>
<reference key="1">
    <citation type="journal article" date="2004" name="J. Infect. Dis.">
        <title>Progress toward characterization of the group A Streptococcus metagenome: complete genome sequence of a macrolide-resistant serotype M6 strain.</title>
        <authorList>
            <person name="Banks D.J."/>
            <person name="Porcella S.F."/>
            <person name="Barbian K.D."/>
            <person name="Beres S.B."/>
            <person name="Philips L.E."/>
            <person name="Voyich J.M."/>
            <person name="DeLeo F.R."/>
            <person name="Martin J.M."/>
            <person name="Somerville G.A."/>
            <person name="Musser J.M."/>
        </authorList>
    </citation>
    <scope>NUCLEOTIDE SEQUENCE [LARGE SCALE GENOMIC DNA]</scope>
    <source>
        <strain>ATCC BAA-946 / MGAS10394</strain>
    </source>
</reference>
<accession>Q5XCA9</accession>
<proteinExistence type="inferred from homology"/>
<dbReference type="EC" id="3.5.4.16" evidence="2"/>
<dbReference type="EMBL" id="CP000003">
    <property type="protein sequence ID" value="AAT86954.1"/>
    <property type="status" value="ALT_INIT"/>
    <property type="molecule type" value="Genomic_DNA"/>
</dbReference>
<dbReference type="SMR" id="Q5XCA9"/>
<dbReference type="KEGG" id="spa:M6_Spy0819"/>
<dbReference type="HOGENOM" id="CLU_049768_3_3_9"/>
<dbReference type="UniPathway" id="UPA00848">
    <property type="reaction ID" value="UER00151"/>
</dbReference>
<dbReference type="Proteomes" id="UP000001167">
    <property type="component" value="Chromosome"/>
</dbReference>
<dbReference type="GO" id="GO:0005737">
    <property type="term" value="C:cytoplasm"/>
    <property type="evidence" value="ECO:0007669"/>
    <property type="project" value="TreeGrafter"/>
</dbReference>
<dbReference type="GO" id="GO:0005525">
    <property type="term" value="F:GTP binding"/>
    <property type="evidence" value="ECO:0007669"/>
    <property type="project" value="UniProtKB-KW"/>
</dbReference>
<dbReference type="GO" id="GO:0003934">
    <property type="term" value="F:GTP cyclohydrolase I activity"/>
    <property type="evidence" value="ECO:0007669"/>
    <property type="project" value="UniProtKB-UniRule"/>
</dbReference>
<dbReference type="GO" id="GO:0008270">
    <property type="term" value="F:zinc ion binding"/>
    <property type="evidence" value="ECO:0007669"/>
    <property type="project" value="UniProtKB-UniRule"/>
</dbReference>
<dbReference type="GO" id="GO:0006730">
    <property type="term" value="P:one-carbon metabolic process"/>
    <property type="evidence" value="ECO:0007669"/>
    <property type="project" value="UniProtKB-UniRule"/>
</dbReference>
<dbReference type="GO" id="GO:0006729">
    <property type="term" value="P:tetrahydrobiopterin biosynthetic process"/>
    <property type="evidence" value="ECO:0007669"/>
    <property type="project" value="TreeGrafter"/>
</dbReference>
<dbReference type="GO" id="GO:0046654">
    <property type="term" value="P:tetrahydrofolate biosynthetic process"/>
    <property type="evidence" value="ECO:0007669"/>
    <property type="project" value="UniProtKB-UniRule"/>
</dbReference>
<dbReference type="FunFam" id="1.10.286.10:FF:000001">
    <property type="entry name" value="GTP cyclohydrolase 1"/>
    <property type="match status" value="1"/>
</dbReference>
<dbReference type="FunFam" id="3.30.1130.10:FF:000001">
    <property type="entry name" value="GTP cyclohydrolase 1"/>
    <property type="match status" value="1"/>
</dbReference>
<dbReference type="Gene3D" id="1.10.286.10">
    <property type="match status" value="1"/>
</dbReference>
<dbReference type="Gene3D" id="3.30.1130.10">
    <property type="match status" value="1"/>
</dbReference>
<dbReference type="HAMAP" id="MF_00223">
    <property type="entry name" value="FolE"/>
    <property type="match status" value="1"/>
</dbReference>
<dbReference type="InterPro" id="IPR043133">
    <property type="entry name" value="GTP-CH-I_C/QueF"/>
</dbReference>
<dbReference type="InterPro" id="IPR043134">
    <property type="entry name" value="GTP-CH-I_N"/>
</dbReference>
<dbReference type="InterPro" id="IPR001474">
    <property type="entry name" value="GTP_CycHdrlase_I"/>
</dbReference>
<dbReference type="InterPro" id="IPR018234">
    <property type="entry name" value="GTP_CycHdrlase_I_CS"/>
</dbReference>
<dbReference type="InterPro" id="IPR020602">
    <property type="entry name" value="GTP_CycHdrlase_I_dom"/>
</dbReference>
<dbReference type="NCBIfam" id="TIGR00063">
    <property type="entry name" value="folE"/>
    <property type="match status" value="1"/>
</dbReference>
<dbReference type="NCBIfam" id="NF006825">
    <property type="entry name" value="PRK09347.1-2"/>
    <property type="match status" value="1"/>
</dbReference>
<dbReference type="NCBIfam" id="NF006826">
    <property type="entry name" value="PRK09347.1-3"/>
    <property type="match status" value="1"/>
</dbReference>
<dbReference type="PANTHER" id="PTHR11109:SF7">
    <property type="entry name" value="GTP CYCLOHYDROLASE 1"/>
    <property type="match status" value="1"/>
</dbReference>
<dbReference type="PANTHER" id="PTHR11109">
    <property type="entry name" value="GTP CYCLOHYDROLASE I"/>
    <property type="match status" value="1"/>
</dbReference>
<dbReference type="Pfam" id="PF01227">
    <property type="entry name" value="GTP_cyclohydroI"/>
    <property type="match status" value="1"/>
</dbReference>
<dbReference type="SUPFAM" id="SSF55620">
    <property type="entry name" value="Tetrahydrobiopterin biosynthesis enzymes-like"/>
    <property type="match status" value="1"/>
</dbReference>
<dbReference type="PROSITE" id="PS00859">
    <property type="entry name" value="GTP_CYCLOHYDROL_1_1"/>
    <property type="match status" value="1"/>
</dbReference>
<dbReference type="PROSITE" id="PS00860">
    <property type="entry name" value="GTP_CYCLOHYDROL_1_2"/>
    <property type="match status" value="1"/>
</dbReference>
<organism>
    <name type="scientific">Streptococcus pyogenes serotype M6 (strain ATCC BAA-946 / MGAS10394)</name>
    <dbReference type="NCBI Taxonomy" id="286636"/>
    <lineage>
        <taxon>Bacteria</taxon>
        <taxon>Bacillati</taxon>
        <taxon>Bacillota</taxon>
        <taxon>Bacilli</taxon>
        <taxon>Lactobacillales</taxon>
        <taxon>Streptococcaceae</taxon>
        <taxon>Streptococcus</taxon>
    </lineage>
</organism>
<comment type="catalytic activity">
    <reaction evidence="2">
        <text>GTP + H2O = 7,8-dihydroneopterin 3'-triphosphate + formate + H(+)</text>
        <dbReference type="Rhea" id="RHEA:17473"/>
        <dbReference type="ChEBI" id="CHEBI:15377"/>
        <dbReference type="ChEBI" id="CHEBI:15378"/>
        <dbReference type="ChEBI" id="CHEBI:15740"/>
        <dbReference type="ChEBI" id="CHEBI:37565"/>
        <dbReference type="ChEBI" id="CHEBI:58462"/>
        <dbReference type="EC" id="3.5.4.16"/>
    </reaction>
</comment>
<comment type="pathway">
    <text evidence="2">Cofactor biosynthesis; 7,8-dihydroneopterin triphosphate biosynthesis; 7,8-dihydroneopterin triphosphate from GTP: step 1/1.</text>
</comment>
<comment type="subunit">
    <text evidence="1">Toroid-shaped homodecamer, composed of two pentamers of five dimers.</text>
</comment>
<comment type="similarity">
    <text evidence="2">Belongs to the GTP cyclohydrolase I family.</text>
</comment>
<comment type="sequence caution" evidence="3">
    <conflict type="erroneous initiation">
        <sequence resource="EMBL-CDS" id="AAT86954"/>
    </conflict>
</comment>
<keyword id="KW-0342">GTP-binding</keyword>
<keyword id="KW-0378">Hydrolase</keyword>
<keyword id="KW-0479">Metal-binding</keyword>
<keyword id="KW-0547">Nucleotide-binding</keyword>
<keyword id="KW-0554">One-carbon metabolism</keyword>
<keyword id="KW-0862">Zinc</keyword>
<evidence type="ECO:0000250" key="1"/>
<evidence type="ECO:0000255" key="2">
    <source>
        <dbReference type="HAMAP-Rule" id="MF_00223"/>
    </source>
</evidence>
<evidence type="ECO:0000305" key="3"/>
<gene>
    <name evidence="2" type="primary">folE</name>
    <name type="ordered locus">M6_Spy0819</name>
</gene>
<feature type="chain" id="PRO_0000119454" description="GTP cyclohydrolase 1">
    <location>
        <begin position="1"/>
        <end position="194"/>
    </location>
</feature>
<feature type="binding site" evidence="2">
    <location>
        <position position="83"/>
    </location>
    <ligand>
        <name>Zn(2+)</name>
        <dbReference type="ChEBI" id="CHEBI:29105"/>
    </ligand>
</feature>
<feature type="binding site" evidence="2">
    <location>
        <position position="86"/>
    </location>
    <ligand>
        <name>Zn(2+)</name>
        <dbReference type="ChEBI" id="CHEBI:29105"/>
    </ligand>
</feature>
<feature type="binding site" evidence="2">
    <location>
        <position position="155"/>
    </location>
    <ligand>
        <name>Zn(2+)</name>
        <dbReference type="ChEBI" id="CHEBI:29105"/>
    </ligand>
</feature>